<gene>
    <name type="primary">yxkC</name>
    <name type="ordered locus">BSU38850</name>
</gene>
<reference key="1">
    <citation type="journal article" date="1996" name="Microbiology">
        <title>Sequencing of a 65 kb region of the Bacillus subtilis genome containing the lic and cel loci, and creation of a 177 kb contig covering the gnt-sacXY region.</title>
        <authorList>
            <person name="Yoshida K."/>
            <person name="Shindo K."/>
            <person name="Sano H."/>
            <person name="Seki S."/>
            <person name="Fujimura M."/>
            <person name="Yanai N."/>
            <person name="Miwa Y."/>
            <person name="Fujita Y."/>
        </authorList>
    </citation>
    <scope>NUCLEOTIDE SEQUENCE [GENOMIC DNA]</scope>
    <source>
        <strain>168 / BGSC1A1</strain>
    </source>
</reference>
<reference key="2">
    <citation type="journal article" date="1997" name="Nature">
        <title>The complete genome sequence of the Gram-positive bacterium Bacillus subtilis.</title>
        <authorList>
            <person name="Kunst F."/>
            <person name="Ogasawara N."/>
            <person name="Moszer I."/>
            <person name="Albertini A.M."/>
            <person name="Alloni G."/>
            <person name="Azevedo V."/>
            <person name="Bertero M.G."/>
            <person name="Bessieres P."/>
            <person name="Bolotin A."/>
            <person name="Borchert S."/>
            <person name="Borriss R."/>
            <person name="Boursier L."/>
            <person name="Brans A."/>
            <person name="Braun M."/>
            <person name="Brignell S.C."/>
            <person name="Bron S."/>
            <person name="Brouillet S."/>
            <person name="Bruschi C.V."/>
            <person name="Caldwell B."/>
            <person name="Capuano V."/>
            <person name="Carter N.M."/>
            <person name="Choi S.-K."/>
            <person name="Codani J.-J."/>
            <person name="Connerton I.F."/>
            <person name="Cummings N.J."/>
            <person name="Daniel R.A."/>
            <person name="Denizot F."/>
            <person name="Devine K.M."/>
            <person name="Duesterhoeft A."/>
            <person name="Ehrlich S.D."/>
            <person name="Emmerson P.T."/>
            <person name="Entian K.-D."/>
            <person name="Errington J."/>
            <person name="Fabret C."/>
            <person name="Ferrari E."/>
            <person name="Foulger D."/>
            <person name="Fritz C."/>
            <person name="Fujita M."/>
            <person name="Fujita Y."/>
            <person name="Fuma S."/>
            <person name="Galizzi A."/>
            <person name="Galleron N."/>
            <person name="Ghim S.-Y."/>
            <person name="Glaser P."/>
            <person name="Goffeau A."/>
            <person name="Golightly E.J."/>
            <person name="Grandi G."/>
            <person name="Guiseppi G."/>
            <person name="Guy B.J."/>
            <person name="Haga K."/>
            <person name="Haiech J."/>
            <person name="Harwood C.R."/>
            <person name="Henaut A."/>
            <person name="Hilbert H."/>
            <person name="Holsappel S."/>
            <person name="Hosono S."/>
            <person name="Hullo M.-F."/>
            <person name="Itaya M."/>
            <person name="Jones L.-M."/>
            <person name="Joris B."/>
            <person name="Karamata D."/>
            <person name="Kasahara Y."/>
            <person name="Klaerr-Blanchard M."/>
            <person name="Klein C."/>
            <person name="Kobayashi Y."/>
            <person name="Koetter P."/>
            <person name="Koningstein G."/>
            <person name="Krogh S."/>
            <person name="Kumano M."/>
            <person name="Kurita K."/>
            <person name="Lapidus A."/>
            <person name="Lardinois S."/>
            <person name="Lauber J."/>
            <person name="Lazarevic V."/>
            <person name="Lee S.-M."/>
            <person name="Levine A."/>
            <person name="Liu H."/>
            <person name="Masuda S."/>
            <person name="Mauel C."/>
            <person name="Medigue C."/>
            <person name="Medina N."/>
            <person name="Mellado R.P."/>
            <person name="Mizuno M."/>
            <person name="Moestl D."/>
            <person name="Nakai S."/>
            <person name="Noback M."/>
            <person name="Noone D."/>
            <person name="O'Reilly M."/>
            <person name="Ogawa K."/>
            <person name="Ogiwara A."/>
            <person name="Oudega B."/>
            <person name="Park S.-H."/>
            <person name="Parro V."/>
            <person name="Pohl T.M."/>
            <person name="Portetelle D."/>
            <person name="Porwollik S."/>
            <person name="Prescott A.M."/>
            <person name="Presecan E."/>
            <person name="Pujic P."/>
            <person name="Purnelle B."/>
            <person name="Rapoport G."/>
            <person name="Rey M."/>
            <person name="Reynolds S."/>
            <person name="Rieger M."/>
            <person name="Rivolta C."/>
            <person name="Rocha E."/>
            <person name="Roche B."/>
            <person name="Rose M."/>
            <person name="Sadaie Y."/>
            <person name="Sato T."/>
            <person name="Scanlan E."/>
            <person name="Schleich S."/>
            <person name="Schroeter R."/>
            <person name="Scoffone F."/>
            <person name="Sekiguchi J."/>
            <person name="Sekowska A."/>
            <person name="Seror S.J."/>
            <person name="Serror P."/>
            <person name="Shin B.-S."/>
            <person name="Soldo B."/>
            <person name="Sorokin A."/>
            <person name="Tacconi E."/>
            <person name="Takagi T."/>
            <person name="Takahashi H."/>
            <person name="Takemaru K."/>
            <person name="Takeuchi M."/>
            <person name="Tamakoshi A."/>
            <person name="Tanaka T."/>
            <person name="Terpstra P."/>
            <person name="Tognoni A."/>
            <person name="Tosato V."/>
            <person name="Uchiyama S."/>
            <person name="Vandenbol M."/>
            <person name="Vannier F."/>
            <person name="Vassarotti A."/>
            <person name="Viari A."/>
            <person name="Wambutt R."/>
            <person name="Wedler E."/>
            <person name="Wedler H."/>
            <person name="Weitzenegger T."/>
            <person name="Winters P."/>
            <person name="Wipat A."/>
            <person name="Yamamoto H."/>
            <person name="Yamane K."/>
            <person name="Yasumoto K."/>
            <person name="Yata K."/>
            <person name="Yoshida K."/>
            <person name="Yoshikawa H.-F."/>
            <person name="Zumstein E."/>
            <person name="Yoshikawa H."/>
            <person name="Danchin A."/>
        </authorList>
    </citation>
    <scope>NUCLEOTIDE SEQUENCE [LARGE SCALE GENOMIC DNA]</scope>
    <source>
        <strain>168</strain>
    </source>
</reference>
<reference key="3">
    <citation type="journal article" date="2000" name="Microbiology">
        <title>Proteome analysis of Bacillus subtilis extracellular proteins: a two-dimensional protein electrophoretic study.</title>
        <authorList>
            <person name="Hirose I."/>
            <person name="Sano K."/>
            <person name="Shioda I."/>
            <person name="Kumano M."/>
            <person name="Nakamura K."/>
            <person name="Yamane K."/>
        </authorList>
    </citation>
    <scope>PROTEIN SEQUENCE OF 31-41</scope>
    <scope>SUBCELLULAR LOCATION</scope>
    <source>
        <strain>168</strain>
    </source>
</reference>
<reference key="4">
    <citation type="journal article" date="2003" name="Mol. Microbiol.">
        <title>Identification of additional TnrA-regulated genes of Bacillus subtilis associated with a TnrA box.</title>
        <authorList>
            <person name="Yoshida K."/>
            <person name="Yamaguchi H."/>
            <person name="Kinehara M."/>
            <person name="Ohki Y.-H."/>
            <person name="Nakaura Y."/>
            <person name="Fujita Y."/>
        </authorList>
    </citation>
    <scope>REGULATION BY TNRA</scope>
</reference>
<reference key="5">
    <citation type="journal article" date="2004" name="Gene">
        <title>Systematic analysis of SigD-regulated genes in Bacillus subtilis by DNA microarray and Northern blotting analyses.</title>
        <authorList>
            <person name="Serizawa M."/>
            <person name="Yamamoto H."/>
            <person name="Yamaguchi H."/>
            <person name="Fujita Y."/>
            <person name="Kobayashi K."/>
            <person name="Ogasawara N."/>
            <person name="Sekiguchi J."/>
        </authorList>
    </citation>
    <scope>INDUCTION BY SIGD</scope>
    <source>
        <strain>168</strain>
    </source>
</reference>
<feature type="signal peptide" evidence="2">
    <location>
        <begin position="1"/>
        <end position="30"/>
    </location>
</feature>
<feature type="chain" id="PRO_0000359517" description="Uncharacterized protein YxkC">
    <location>
        <begin position="31"/>
        <end position="180"/>
    </location>
</feature>
<feature type="region of interest" description="Disordered" evidence="1">
    <location>
        <begin position="25"/>
        <end position="46"/>
    </location>
</feature>
<feature type="compositionally biased region" description="Low complexity" evidence="1">
    <location>
        <begin position="29"/>
        <end position="39"/>
    </location>
</feature>
<protein>
    <recommendedName>
        <fullName>Uncharacterized protein YxkC</fullName>
    </recommendedName>
</protein>
<dbReference type="EMBL" id="D83026">
    <property type="protein sequence ID" value="BAA11719.1"/>
    <property type="status" value="ALT_INIT"/>
    <property type="molecule type" value="Genomic_DNA"/>
</dbReference>
<dbReference type="EMBL" id="AL009126">
    <property type="protein sequence ID" value="CAB15911.2"/>
    <property type="molecule type" value="Genomic_DNA"/>
</dbReference>
<dbReference type="PIR" id="F70080">
    <property type="entry name" value="F70080"/>
</dbReference>
<dbReference type="RefSeq" id="NP_391764.2">
    <property type="nucleotide sequence ID" value="NC_000964.3"/>
</dbReference>
<dbReference type="SMR" id="P94356"/>
<dbReference type="FunCoup" id="P94356">
    <property type="interactions" value="30"/>
</dbReference>
<dbReference type="STRING" id="224308.BSU38850"/>
<dbReference type="jPOST" id="P94356"/>
<dbReference type="PaxDb" id="224308-BSU38850"/>
<dbReference type="EnsemblBacteria" id="CAB15911">
    <property type="protein sequence ID" value="CAB15911"/>
    <property type="gene ID" value="BSU_38850"/>
</dbReference>
<dbReference type="GeneID" id="937416"/>
<dbReference type="KEGG" id="bsu:BSU38850"/>
<dbReference type="eggNOG" id="ENOG50348S7">
    <property type="taxonomic scope" value="Bacteria"/>
</dbReference>
<dbReference type="InParanoid" id="P94356"/>
<dbReference type="OrthoDB" id="1938949at2"/>
<dbReference type="BioCyc" id="BSUB:BSU38850-MONOMER"/>
<dbReference type="Proteomes" id="UP000001570">
    <property type="component" value="Chromosome"/>
</dbReference>
<dbReference type="GO" id="GO:0005576">
    <property type="term" value="C:extracellular region"/>
    <property type="evidence" value="ECO:0007669"/>
    <property type="project" value="UniProtKB-SubCell"/>
</dbReference>
<dbReference type="Gene3D" id="2.60.40.1240">
    <property type="match status" value="1"/>
</dbReference>
<dbReference type="InterPro" id="IPR029051">
    <property type="entry name" value="DUF4352"/>
</dbReference>
<dbReference type="InterPro" id="IPR029050">
    <property type="entry name" value="Immunoprotect_excell_Ig-like"/>
</dbReference>
<dbReference type="Pfam" id="PF11611">
    <property type="entry name" value="DUF4352"/>
    <property type="match status" value="1"/>
</dbReference>
<comment type="subcellular location">
    <subcellularLocation>
        <location evidence="2">Secreted</location>
    </subcellularLocation>
</comment>
<comment type="induction">
    <text evidence="3">Transcriptionally regulated by SigD. Negatively regulated by TnrA under nitrogen-limited conditions.</text>
</comment>
<comment type="sequence caution" evidence="4">
    <conflict type="erroneous initiation">
        <sequence resource="EMBL-CDS" id="BAA11719"/>
    </conflict>
    <text>Extended N-terminus.</text>
</comment>
<organism>
    <name type="scientific">Bacillus subtilis (strain 168)</name>
    <dbReference type="NCBI Taxonomy" id="224308"/>
    <lineage>
        <taxon>Bacteria</taxon>
        <taxon>Bacillati</taxon>
        <taxon>Bacillota</taxon>
        <taxon>Bacilli</taxon>
        <taxon>Bacillales</taxon>
        <taxon>Bacillaceae</taxon>
        <taxon>Bacillus</taxon>
    </lineage>
</organism>
<name>YXKC_BACSU</name>
<keyword id="KW-0903">Direct protein sequencing</keyword>
<keyword id="KW-1185">Reference proteome</keyword>
<keyword id="KW-0964">Secreted</keyword>
<keyword id="KW-0732">Signal</keyword>
<sequence>MRHKIITFILAVVVIIIIGNMIGGGGGSEATSKTSSSSKAETEKTYNIGDTVKTEKTEVTVTKVEDRDTVGTQYVEKKASEGGTIVAVQYTIKNVSKKPISSFSIPTVKLVDADGTSYDSDIDASVNYATETKVDNSKILSDLNPNIKVTGVKAFEVDKEAYAKGTWKLKFSNDVIVKIK</sequence>
<proteinExistence type="evidence at protein level"/>
<accession>P94356</accession>
<accession>Q794X5</accession>
<evidence type="ECO:0000256" key="1">
    <source>
        <dbReference type="SAM" id="MobiDB-lite"/>
    </source>
</evidence>
<evidence type="ECO:0000269" key="2">
    <source>
    </source>
</evidence>
<evidence type="ECO:0000269" key="3">
    <source>
    </source>
</evidence>
<evidence type="ECO:0000305" key="4"/>